<organism>
    <name type="scientific">Chlorokybus atmophyticus</name>
    <name type="common">Soil alga</name>
    <dbReference type="NCBI Taxonomy" id="3144"/>
    <lineage>
        <taxon>Eukaryota</taxon>
        <taxon>Viridiplantae</taxon>
        <taxon>Streptophyta</taxon>
        <taxon>Chlorokybophyceae</taxon>
        <taxon>Chlorokybales</taxon>
        <taxon>Chlorokybaceae</taxon>
        <taxon>Chlorokybus</taxon>
    </lineage>
</organism>
<name>PETG_CHLAT</name>
<reference key="1">
    <citation type="journal article" date="2007" name="BMC Biol.">
        <title>A clade uniting the green algae Mesostigma viride and Chlorokybus atmophyticus represents the deepest branch of the Streptophyta in chloroplast genome-based phylogenies.</title>
        <authorList>
            <person name="Lemieux C."/>
            <person name="Otis C."/>
            <person name="Turmel M."/>
        </authorList>
    </citation>
    <scope>NUCLEOTIDE SEQUENCE [LARGE SCALE GENOMIC DNA]</scope>
    <source>
        <strain>SAG 48.80</strain>
    </source>
</reference>
<keyword id="KW-0150">Chloroplast</keyword>
<keyword id="KW-0249">Electron transport</keyword>
<keyword id="KW-0472">Membrane</keyword>
<keyword id="KW-0602">Photosynthesis</keyword>
<keyword id="KW-0934">Plastid</keyword>
<keyword id="KW-0793">Thylakoid</keyword>
<keyword id="KW-0812">Transmembrane</keyword>
<keyword id="KW-1133">Transmembrane helix</keyword>
<keyword id="KW-0813">Transport</keyword>
<feature type="chain" id="PRO_0000355377" description="Cytochrome b6-f complex subunit 5">
    <location>
        <begin position="1"/>
        <end position="37"/>
    </location>
</feature>
<feature type="transmembrane region" description="Helical" evidence="1">
    <location>
        <begin position="5"/>
        <end position="25"/>
    </location>
</feature>
<proteinExistence type="inferred from homology"/>
<geneLocation type="chloroplast"/>
<sequence>MVEPLLSGIVLGLIPVTLAGLFVTAYLQYRRGDKLNR</sequence>
<comment type="function">
    <text evidence="1">Component of the cytochrome b6-f complex, which mediates electron transfer between photosystem II (PSII) and photosystem I (PSI), cyclic electron flow around PSI, and state transitions. PetG is required for either the stability or assembly of the cytochrome b6-f complex.</text>
</comment>
<comment type="subunit">
    <text evidence="1">The 4 large subunits of the cytochrome b6-f complex are cytochrome b6, subunit IV (17 kDa polypeptide, PetD), cytochrome f and the Rieske protein, while the 4 small subunits are PetG, PetL, PetM and PetN. The complex functions as a dimer.</text>
</comment>
<comment type="subcellular location">
    <subcellularLocation>
        <location evidence="1">Plastid</location>
        <location evidence="1">Chloroplast thylakoid membrane</location>
        <topology evidence="1">Single-pass membrane protein</topology>
    </subcellularLocation>
</comment>
<comment type="similarity">
    <text evidence="1">Belongs to the PetG family.</text>
</comment>
<protein>
    <recommendedName>
        <fullName evidence="1">Cytochrome b6-f complex subunit 5</fullName>
    </recommendedName>
    <alternativeName>
        <fullName evidence="1">Cytochrome b6-f complex subunit PetG</fullName>
    </alternativeName>
    <alternativeName>
        <fullName evidence="1">Cytochrome b6-f complex subunit V</fullName>
    </alternativeName>
</protein>
<evidence type="ECO:0000255" key="1">
    <source>
        <dbReference type="HAMAP-Rule" id="MF_00432"/>
    </source>
</evidence>
<dbReference type="EMBL" id="DQ422812">
    <property type="protein sequence ID" value="ABD62204.2"/>
    <property type="molecule type" value="Genomic_DNA"/>
</dbReference>
<dbReference type="RefSeq" id="YP_001019067.1">
    <property type="nucleotide sequence ID" value="NC_008822.1"/>
</dbReference>
<dbReference type="SMR" id="Q19VC5"/>
<dbReference type="GeneID" id="4783216"/>
<dbReference type="GO" id="GO:0009535">
    <property type="term" value="C:chloroplast thylakoid membrane"/>
    <property type="evidence" value="ECO:0007669"/>
    <property type="project" value="UniProtKB-SubCell"/>
</dbReference>
<dbReference type="GO" id="GO:0009512">
    <property type="term" value="C:cytochrome b6f complex"/>
    <property type="evidence" value="ECO:0007669"/>
    <property type="project" value="InterPro"/>
</dbReference>
<dbReference type="GO" id="GO:0045158">
    <property type="term" value="F:electron transporter, transferring electrons within cytochrome b6/f complex of photosystem II activity"/>
    <property type="evidence" value="ECO:0007669"/>
    <property type="project" value="UniProtKB-UniRule"/>
</dbReference>
<dbReference type="GO" id="GO:0017004">
    <property type="term" value="P:cytochrome complex assembly"/>
    <property type="evidence" value="ECO:0007669"/>
    <property type="project" value="UniProtKB-UniRule"/>
</dbReference>
<dbReference type="GO" id="GO:0015979">
    <property type="term" value="P:photosynthesis"/>
    <property type="evidence" value="ECO:0007669"/>
    <property type="project" value="UniProtKB-KW"/>
</dbReference>
<dbReference type="HAMAP" id="MF_00432">
    <property type="entry name" value="Cytb6_f_PetG"/>
    <property type="match status" value="1"/>
</dbReference>
<dbReference type="InterPro" id="IPR003683">
    <property type="entry name" value="Cyt_6/f_cplx_su5"/>
</dbReference>
<dbReference type="InterPro" id="IPR036099">
    <property type="entry name" value="Cyt_6/f_cplx_su5_sf"/>
</dbReference>
<dbReference type="NCBIfam" id="NF001907">
    <property type="entry name" value="PRK00665.1"/>
    <property type="match status" value="1"/>
</dbReference>
<dbReference type="Pfam" id="PF02529">
    <property type="entry name" value="PetG"/>
    <property type="match status" value="1"/>
</dbReference>
<dbReference type="PIRSF" id="PIRSF000034">
    <property type="entry name" value="Cyt_b6-f_V"/>
    <property type="match status" value="1"/>
</dbReference>
<dbReference type="SUPFAM" id="SSF103446">
    <property type="entry name" value="PetG subunit of the cytochrome b6f complex"/>
    <property type="match status" value="1"/>
</dbReference>
<accession>Q19VC5</accession>
<gene>
    <name evidence="1" type="primary">petG</name>
</gene>